<comment type="function">
    <text evidence="1">Forms part of the ribosomal stalk, playing a central role in the interaction of the ribosome with GTP-bound translation factors.</text>
</comment>
<comment type="subunit">
    <text evidence="1">Part of the ribosomal stalk of the 50S ribosomal subunit. The N-terminus interacts with L11 and the large rRNA to form the base of the stalk. The C-terminus forms an elongated spine to which L12 dimers bind in a sequential fashion forming a multimeric L10(L12)X complex.</text>
</comment>
<comment type="similarity">
    <text evidence="1">Belongs to the universal ribosomal protein uL10 family.</text>
</comment>
<feature type="chain" id="PRO_0000154712" description="Large ribosomal subunit protein uL10">
    <location>
        <begin position="1"/>
        <end position="166"/>
    </location>
</feature>
<name>RL10_STAEQ</name>
<protein>
    <recommendedName>
        <fullName evidence="1">Large ribosomal subunit protein uL10</fullName>
    </recommendedName>
    <alternativeName>
        <fullName evidence="2">50S ribosomal protein L10</fullName>
    </alternativeName>
</protein>
<reference key="1">
    <citation type="journal article" date="2005" name="J. Bacteriol.">
        <title>Insights on evolution of virulence and resistance from the complete genome analysis of an early methicillin-resistant Staphylococcus aureus strain and a biofilm-producing methicillin-resistant Staphylococcus epidermidis strain.</title>
        <authorList>
            <person name="Gill S.R."/>
            <person name="Fouts D.E."/>
            <person name="Archer G.L."/>
            <person name="Mongodin E.F."/>
            <person name="DeBoy R.T."/>
            <person name="Ravel J."/>
            <person name="Paulsen I.T."/>
            <person name="Kolonay J.F."/>
            <person name="Brinkac L.M."/>
            <person name="Beanan M.J."/>
            <person name="Dodson R.J."/>
            <person name="Daugherty S.C."/>
            <person name="Madupu R."/>
            <person name="Angiuoli S.V."/>
            <person name="Durkin A.S."/>
            <person name="Haft D.H."/>
            <person name="Vamathevan J.J."/>
            <person name="Khouri H."/>
            <person name="Utterback T.R."/>
            <person name="Lee C."/>
            <person name="Dimitrov G."/>
            <person name="Jiang L."/>
            <person name="Qin H."/>
            <person name="Weidman J."/>
            <person name="Tran K."/>
            <person name="Kang K.H."/>
            <person name="Hance I.R."/>
            <person name="Nelson K.E."/>
            <person name="Fraser C.M."/>
        </authorList>
    </citation>
    <scope>NUCLEOTIDE SEQUENCE [LARGE SCALE GENOMIC DNA]</scope>
    <source>
        <strain>ATCC 35984 / DSM 28319 / BCRC 17069 / CCUG 31568 / BM 3577 / RP62A</strain>
    </source>
</reference>
<gene>
    <name evidence="1" type="primary">rplJ</name>
    <name type="ordered locus">SERP0180</name>
</gene>
<sequence length="166" mass="17792">MSAIIEAKKQQVDTIAEQLKNSVSTVIVDYRGLTVAEVTELRSQLREAGVEYKVYKNTMVRRAAEQAGIEGLDEFLTGPTAIATSTEDVVAPAKVIAGFAKEHEALEVKTGVMEGNVISAEEVKTVGSLPSHDGLVSMLLSVLQAPVRNFAYAVKAVGEQKEESAE</sequence>
<evidence type="ECO:0000255" key="1">
    <source>
        <dbReference type="HAMAP-Rule" id="MF_00362"/>
    </source>
</evidence>
<evidence type="ECO:0000305" key="2"/>
<dbReference type="EMBL" id="CP000029">
    <property type="protein sequence ID" value="AAW53577.1"/>
    <property type="molecule type" value="Genomic_DNA"/>
</dbReference>
<dbReference type="RefSeq" id="WP_001832306.1">
    <property type="nucleotide sequence ID" value="NC_002976.3"/>
</dbReference>
<dbReference type="SMR" id="Q5HRL3"/>
<dbReference type="STRING" id="176279.SERP0180"/>
<dbReference type="GeneID" id="50019532"/>
<dbReference type="KEGG" id="ser:SERP0180"/>
<dbReference type="eggNOG" id="COG0244">
    <property type="taxonomic scope" value="Bacteria"/>
</dbReference>
<dbReference type="HOGENOM" id="CLU_092227_2_0_9"/>
<dbReference type="Proteomes" id="UP000000531">
    <property type="component" value="Chromosome"/>
</dbReference>
<dbReference type="GO" id="GO:0015934">
    <property type="term" value="C:large ribosomal subunit"/>
    <property type="evidence" value="ECO:0007669"/>
    <property type="project" value="InterPro"/>
</dbReference>
<dbReference type="GO" id="GO:0070180">
    <property type="term" value="F:large ribosomal subunit rRNA binding"/>
    <property type="evidence" value="ECO:0007669"/>
    <property type="project" value="UniProtKB-UniRule"/>
</dbReference>
<dbReference type="GO" id="GO:0003735">
    <property type="term" value="F:structural constituent of ribosome"/>
    <property type="evidence" value="ECO:0007669"/>
    <property type="project" value="InterPro"/>
</dbReference>
<dbReference type="GO" id="GO:0006412">
    <property type="term" value="P:translation"/>
    <property type="evidence" value="ECO:0007669"/>
    <property type="project" value="UniProtKB-UniRule"/>
</dbReference>
<dbReference type="CDD" id="cd05797">
    <property type="entry name" value="Ribosomal_L10"/>
    <property type="match status" value="1"/>
</dbReference>
<dbReference type="FunFam" id="3.30.70.1730:FF:000001">
    <property type="entry name" value="50S ribosomal protein L10"/>
    <property type="match status" value="1"/>
</dbReference>
<dbReference type="Gene3D" id="3.30.70.1730">
    <property type="match status" value="1"/>
</dbReference>
<dbReference type="Gene3D" id="6.10.250.290">
    <property type="match status" value="1"/>
</dbReference>
<dbReference type="HAMAP" id="MF_00362">
    <property type="entry name" value="Ribosomal_uL10"/>
    <property type="match status" value="1"/>
</dbReference>
<dbReference type="InterPro" id="IPR001790">
    <property type="entry name" value="Ribosomal_uL10"/>
</dbReference>
<dbReference type="InterPro" id="IPR043141">
    <property type="entry name" value="Ribosomal_uL10-like_sf"/>
</dbReference>
<dbReference type="InterPro" id="IPR022973">
    <property type="entry name" value="Ribosomal_uL10_bac"/>
</dbReference>
<dbReference type="InterPro" id="IPR047865">
    <property type="entry name" value="Ribosomal_uL10_bac_type"/>
</dbReference>
<dbReference type="InterPro" id="IPR002363">
    <property type="entry name" value="Ribosomal_uL10_CS_bac"/>
</dbReference>
<dbReference type="NCBIfam" id="NF000955">
    <property type="entry name" value="PRK00099.1-1"/>
    <property type="match status" value="1"/>
</dbReference>
<dbReference type="PANTHER" id="PTHR11560">
    <property type="entry name" value="39S RIBOSOMAL PROTEIN L10, MITOCHONDRIAL"/>
    <property type="match status" value="1"/>
</dbReference>
<dbReference type="Pfam" id="PF00466">
    <property type="entry name" value="Ribosomal_L10"/>
    <property type="match status" value="1"/>
</dbReference>
<dbReference type="SUPFAM" id="SSF160369">
    <property type="entry name" value="Ribosomal protein L10-like"/>
    <property type="match status" value="1"/>
</dbReference>
<dbReference type="PROSITE" id="PS01109">
    <property type="entry name" value="RIBOSOMAL_L10"/>
    <property type="match status" value="1"/>
</dbReference>
<accession>Q5HRL3</accession>
<keyword id="KW-1185">Reference proteome</keyword>
<keyword id="KW-0687">Ribonucleoprotein</keyword>
<keyword id="KW-0689">Ribosomal protein</keyword>
<keyword id="KW-0694">RNA-binding</keyword>
<keyword id="KW-0699">rRNA-binding</keyword>
<organism>
    <name type="scientific">Staphylococcus epidermidis (strain ATCC 35984 / DSM 28319 / BCRC 17069 / CCUG 31568 / BM 3577 / RP62A)</name>
    <dbReference type="NCBI Taxonomy" id="176279"/>
    <lineage>
        <taxon>Bacteria</taxon>
        <taxon>Bacillati</taxon>
        <taxon>Bacillota</taxon>
        <taxon>Bacilli</taxon>
        <taxon>Bacillales</taxon>
        <taxon>Staphylococcaceae</taxon>
        <taxon>Staphylococcus</taxon>
    </lineage>
</organism>
<proteinExistence type="inferred from homology"/>